<organism>
    <name type="scientific">Methylobacterium sp. (strain 4-46)</name>
    <dbReference type="NCBI Taxonomy" id="426117"/>
    <lineage>
        <taxon>Bacteria</taxon>
        <taxon>Pseudomonadati</taxon>
        <taxon>Pseudomonadota</taxon>
        <taxon>Alphaproteobacteria</taxon>
        <taxon>Hyphomicrobiales</taxon>
        <taxon>Methylobacteriaceae</taxon>
        <taxon>Methylobacterium</taxon>
    </lineage>
</organism>
<protein>
    <recommendedName>
        <fullName evidence="1">Periplasmic nitrate reductase</fullName>
        <ecNumber evidence="1">1.9.6.1</ecNumber>
    </recommendedName>
</protein>
<comment type="function">
    <text evidence="1">Catalytic subunit of the periplasmic nitrate reductase complex NapAB. Receives electrons from NapB and catalyzes the reduction of nitrate to nitrite.</text>
</comment>
<comment type="catalytic activity">
    <reaction evidence="1">
        <text>2 Fe(II)-[cytochrome] + nitrate + 2 H(+) = 2 Fe(III)-[cytochrome] + nitrite + H2O</text>
        <dbReference type="Rhea" id="RHEA:12909"/>
        <dbReference type="Rhea" id="RHEA-COMP:11777"/>
        <dbReference type="Rhea" id="RHEA-COMP:11778"/>
        <dbReference type="ChEBI" id="CHEBI:15377"/>
        <dbReference type="ChEBI" id="CHEBI:15378"/>
        <dbReference type="ChEBI" id="CHEBI:16301"/>
        <dbReference type="ChEBI" id="CHEBI:17632"/>
        <dbReference type="ChEBI" id="CHEBI:29033"/>
        <dbReference type="ChEBI" id="CHEBI:29034"/>
        <dbReference type="EC" id="1.9.6.1"/>
    </reaction>
</comment>
<comment type="cofactor">
    <cofactor evidence="1">
        <name>[4Fe-4S] cluster</name>
        <dbReference type="ChEBI" id="CHEBI:49883"/>
    </cofactor>
    <text evidence="1">Binds 1 [4Fe-4S] cluster.</text>
</comment>
<comment type="cofactor">
    <cofactor evidence="1">
        <name>Mo-bis(molybdopterin guanine dinucleotide)</name>
        <dbReference type="ChEBI" id="CHEBI:60539"/>
    </cofactor>
    <text evidence="1">Binds 1 molybdenum-bis(molybdopterin guanine dinucleotide) (Mo-bis-MGD) cofactor per subunit.</text>
</comment>
<comment type="subunit">
    <text evidence="1">Component of the periplasmic nitrate reductase NapAB complex composed of NapA and NapB.</text>
</comment>
<comment type="subcellular location">
    <subcellularLocation>
        <location evidence="1">Periplasm</location>
    </subcellularLocation>
</comment>
<comment type="PTM">
    <text evidence="1">Predicted to be exported by the Tat system. The position of the signal peptide cleavage has not been experimentally proven.</text>
</comment>
<comment type="similarity">
    <text evidence="1">Belongs to the prokaryotic molybdopterin-containing oxidoreductase family. NasA/NapA/NarB subfamily.</text>
</comment>
<name>NAPA_METS4</name>
<reference key="1">
    <citation type="submission" date="2008-02" db="EMBL/GenBank/DDBJ databases">
        <title>Complete sequence of chromosome of Methylobacterium sp. 4-46.</title>
        <authorList>
            <consortium name="US DOE Joint Genome Institute"/>
            <person name="Copeland A."/>
            <person name="Lucas S."/>
            <person name="Lapidus A."/>
            <person name="Glavina del Rio T."/>
            <person name="Dalin E."/>
            <person name="Tice H."/>
            <person name="Bruce D."/>
            <person name="Goodwin L."/>
            <person name="Pitluck S."/>
            <person name="Chertkov O."/>
            <person name="Brettin T."/>
            <person name="Detter J.C."/>
            <person name="Han C."/>
            <person name="Kuske C.R."/>
            <person name="Schmutz J."/>
            <person name="Larimer F."/>
            <person name="Land M."/>
            <person name="Hauser L."/>
            <person name="Kyrpides N."/>
            <person name="Ivanova N."/>
            <person name="Marx C.J."/>
            <person name="Richardson P."/>
        </authorList>
    </citation>
    <scope>NUCLEOTIDE SEQUENCE [LARGE SCALE GENOMIC DNA]</scope>
    <source>
        <strain>4-46</strain>
    </source>
</reference>
<proteinExistence type="inferred from homology"/>
<evidence type="ECO:0000255" key="1">
    <source>
        <dbReference type="HAMAP-Rule" id="MF_01630"/>
    </source>
</evidence>
<gene>
    <name evidence="1" type="primary">napA</name>
    <name type="ordered locus">M446_1019</name>
</gene>
<dbReference type="EC" id="1.9.6.1" evidence="1"/>
<dbReference type="EMBL" id="CP000943">
    <property type="protein sequence ID" value="ACA15550.1"/>
    <property type="molecule type" value="Genomic_DNA"/>
</dbReference>
<dbReference type="RefSeq" id="WP_012330967.1">
    <property type="nucleotide sequence ID" value="NC_010511.1"/>
</dbReference>
<dbReference type="SMR" id="B0UCB6"/>
<dbReference type="STRING" id="426117.M446_1019"/>
<dbReference type="KEGG" id="met:M446_1019"/>
<dbReference type="eggNOG" id="COG0243">
    <property type="taxonomic scope" value="Bacteria"/>
</dbReference>
<dbReference type="HOGENOM" id="CLU_000422_13_4_5"/>
<dbReference type="GO" id="GO:0016020">
    <property type="term" value="C:membrane"/>
    <property type="evidence" value="ECO:0007669"/>
    <property type="project" value="TreeGrafter"/>
</dbReference>
<dbReference type="GO" id="GO:0009325">
    <property type="term" value="C:nitrate reductase complex"/>
    <property type="evidence" value="ECO:0007669"/>
    <property type="project" value="TreeGrafter"/>
</dbReference>
<dbReference type="GO" id="GO:0042597">
    <property type="term" value="C:periplasmic space"/>
    <property type="evidence" value="ECO:0007669"/>
    <property type="project" value="UniProtKB-SubCell"/>
</dbReference>
<dbReference type="GO" id="GO:0051539">
    <property type="term" value="F:4 iron, 4 sulfur cluster binding"/>
    <property type="evidence" value="ECO:0007669"/>
    <property type="project" value="UniProtKB-KW"/>
</dbReference>
<dbReference type="GO" id="GO:0009055">
    <property type="term" value="F:electron transfer activity"/>
    <property type="evidence" value="ECO:0007669"/>
    <property type="project" value="UniProtKB-UniRule"/>
</dbReference>
<dbReference type="GO" id="GO:0005506">
    <property type="term" value="F:iron ion binding"/>
    <property type="evidence" value="ECO:0007669"/>
    <property type="project" value="UniProtKB-UniRule"/>
</dbReference>
<dbReference type="GO" id="GO:0030151">
    <property type="term" value="F:molybdenum ion binding"/>
    <property type="evidence" value="ECO:0007669"/>
    <property type="project" value="InterPro"/>
</dbReference>
<dbReference type="GO" id="GO:0043546">
    <property type="term" value="F:molybdopterin cofactor binding"/>
    <property type="evidence" value="ECO:0007669"/>
    <property type="project" value="InterPro"/>
</dbReference>
<dbReference type="GO" id="GO:0050140">
    <property type="term" value="F:nitrate reductase (cytochrome) activity"/>
    <property type="evidence" value="ECO:0007669"/>
    <property type="project" value="UniProtKB-EC"/>
</dbReference>
<dbReference type="GO" id="GO:0045333">
    <property type="term" value="P:cellular respiration"/>
    <property type="evidence" value="ECO:0007669"/>
    <property type="project" value="UniProtKB-ARBA"/>
</dbReference>
<dbReference type="GO" id="GO:0006777">
    <property type="term" value="P:Mo-molybdopterin cofactor biosynthetic process"/>
    <property type="evidence" value="ECO:0007669"/>
    <property type="project" value="UniProtKB-UniRule"/>
</dbReference>
<dbReference type="GO" id="GO:0042128">
    <property type="term" value="P:nitrate assimilation"/>
    <property type="evidence" value="ECO:0007669"/>
    <property type="project" value="UniProtKB-UniRule"/>
</dbReference>
<dbReference type="CDD" id="cd02791">
    <property type="entry name" value="MopB_CT_Nitrate-R-NapA-like"/>
    <property type="match status" value="1"/>
</dbReference>
<dbReference type="CDD" id="cd02754">
    <property type="entry name" value="MopB_Nitrate-R-NapA-like"/>
    <property type="match status" value="1"/>
</dbReference>
<dbReference type="FunFam" id="2.40.40.20:FF:000005">
    <property type="entry name" value="Periplasmic nitrate reductase"/>
    <property type="match status" value="1"/>
</dbReference>
<dbReference type="Gene3D" id="2.40.40.20">
    <property type="match status" value="1"/>
</dbReference>
<dbReference type="Gene3D" id="3.30.200.210">
    <property type="match status" value="1"/>
</dbReference>
<dbReference type="Gene3D" id="3.40.50.740">
    <property type="match status" value="1"/>
</dbReference>
<dbReference type="Gene3D" id="3.40.228.10">
    <property type="entry name" value="Dimethylsulfoxide Reductase, domain 2"/>
    <property type="match status" value="1"/>
</dbReference>
<dbReference type="HAMAP" id="MF_01630">
    <property type="entry name" value="Nitrate_reduct_NapA"/>
    <property type="match status" value="1"/>
</dbReference>
<dbReference type="InterPro" id="IPR009010">
    <property type="entry name" value="Asp_de-COase-like_dom_sf"/>
</dbReference>
<dbReference type="InterPro" id="IPR041957">
    <property type="entry name" value="CT_Nitrate-R-NapA-like"/>
</dbReference>
<dbReference type="InterPro" id="IPR006657">
    <property type="entry name" value="MoPterin_dinucl-bd_dom"/>
</dbReference>
<dbReference type="InterPro" id="IPR006656">
    <property type="entry name" value="Mopterin_OxRdtase"/>
</dbReference>
<dbReference type="InterPro" id="IPR006963">
    <property type="entry name" value="Mopterin_OxRdtase_4Fe-4S_dom"/>
</dbReference>
<dbReference type="InterPro" id="IPR027467">
    <property type="entry name" value="MopterinOxRdtase_cofactor_BS"/>
</dbReference>
<dbReference type="InterPro" id="IPR010051">
    <property type="entry name" value="Periplasm_NO3_reductase_lsu"/>
</dbReference>
<dbReference type="InterPro" id="IPR050123">
    <property type="entry name" value="Prok_molybdopt-oxidoreductase"/>
</dbReference>
<dbReference type="InterPro" id="IPR006311">
    <property type="entry name" value="TAT_signal"/>
</dbReference>
<dbReference type="InterPro" id="IPR019546">
    <property type="entry name" value="TAT_signal_bac_arc"/>
</dbReference>
<dbReference type="NCBIfam" id="TIGR01706">
    <property type="entry name" value="NAPA"/>
    <property type="match status" value="1"/>
</dbReference>
<dbReference type="NCBIfam" id="NF010055">
    <property type="entry name" value="PRK13532.1"/>
    <property type="match status" value="1"/>
</dbReference>
<dbReference type="NCBIfam" id="TIGR01409">
    <property type="entry name" value="TAT_signal_seq"/>
    <property type="match status" value="1"/>
</dbReference>
<dbReference type="PANTHER" id="PTHR43105:SF11">
    <property type="entry name" value="PERIPLASMIC NITRATE REDUCTASE"/>
    <property type="match status" value="1"/>
</dbReference>
<dbReference type="PANTHER" id="PTHR43105">
    <property type="entry name" value="RESPIRATORY NITRATE REDUCTASE"/>
    <property type="match status" value="1"/>
</dbReference>
<dbReference type="Pfam" id="PF04879">
    <property type="entry name" value="Molybdop_Fe4S4"/>
    <property type="match status" value="1"/>
</dbReference>
<dbReference type="Pfam" id="PF00384">
    <property type="entry name" value="Molybdopterin"/>
    <property type="match status" value="1"/>
</dbReference>
<dbReference type="Pfam" id="PF01568">
    <property type="entry name" value="Molydop_binding"/>
    <property type="match status" value="1"/>
</dbReference>
<dbReference type="SMART" id="SM00926">
    <property type="entry name" value="Molybdop_Fe4S4"/>
    <property type="match status" value="1"/>
</dbReference>
<dbReference type="SUPFAM" id="SSF50692">
    <property type="entry name" value="ADC-like"/>
    <property type="match status" value="1"/>
</dbReference>
<dbReference type="SUPFAM" id="SSF53706">
    <property type="entry name" value="Formate dehydrogenase/DMSO reductase, domains 1-3"/>
    <property type="match status" value="1"/>
</dbReference>
<dbReference type="PROSITE" id="PS51669">
    <property type="entry name" value="4FE4S_MOW_BIS_MGD"/>
    <property type="match status" value="1"/>
</dbReference>
<dbReference type="PROSITE" id="PS00551">
    <property type="entry name" value="MOLYBDOPTERIN_PROK_1"/>
    <property type="match status" value="1"/>
</dbReference>
<dbReference type="PROSITE" id="PS51318">
    <property type="entry name" value="TAT"/>
    <property type="match status" value="1"/>
</dbReference>
<keyword id="KW-0004">4Fe-4S</keyword>
<keyword id="KW-0249">Electron transport</keyword>
<keyword id="KW-0408">Iron</keyword>
<keyword id="KW-0411">Iron-sulfur</keyword>
<keyword id="KW-0479">Metal-binding</keyword>
<keyword id="KW-0500">Molybdenum</keyword>
<keyword id="KW-0534">Nitrate assimilation</keyword>
<keyword id="KW-0560">Oxidoreductase</keyword>
<keyword id="KW-0574">Periplasm</keyword>
<keyword id="KW-0732">Signal</keyword>
<keyword id="KW-0813">Transport</keyword>
<sequence>MDMSRRTLLKAQAAAAAAAVAGIDLPAEAQNLAAGEDIALKWSKAPCRFCGTGCGVMVGVKDGRVVATHGDMQAEVNRGLNCVKGYFLSKIMYGADRLTQPLMRVRGGKFDKNAELQPVSWDQAFDEMARQWKRVLREKGPKAVGMFGSGQWTIFEGYAATKLMRAGFRSNNLDPNARHCMASAAVGFIRTFGMDEPMGCYDDFEHADAFVLWGSNMAEMHPILWTRVIDRRLSAPHVRIATLSTYEHRTTELSDQSLIFQPGTDLAILNFVANYIIQNGAVNRDFVERHVNFRVANTDIGYGLRPEHVLEQRATHANEAAVSQPSNFDAYARMVGEYTLEKTEELTGVSKERLLTLAKTYADPKIRVMSLWTMGFNQHVRGVWANHLVYNIHLLTGKISEPGNSPFSLTGQPSACGTAREVGTFSHRLPADMQVNNPEHRKHAEEIWKLPPGLLNGEIGYHAVQQDRMLKDGKLNAYWIMCNNNLQTAPNTNTETYPGYRNPANFVVCSDPYPTVTAMAADVVLPTAMWVEKEGAYGNAERRTHMWRQLVNAPGDARSDLWQLMEFSKRFTTDEVWAQEILVAHPDYKGKSLFDVLWRNGSVDRFGLDEIAADHENFESKQFGFYVQKGLFEEYASFGRGHGHDLAPFDRYHEVRGLRWPVVDGKETRWRYREGHDPYVEKGAGWQFYGNPDRRAVVMAAPYEPPAEAPDQEYDLWLVTGRVLEHWHSGSMTMRVPELYRAFTGAVMFMHPDDAQKRGLRRGQEVRIISRRGEIRSRVETRGRNKMPPGRVFVPFFDASQLINKATLDATDPISKQTDFKKCAVKVIGVATAERGAE</sequence>
<accession>B0UCB6</accession>
<feature type="signal peptide" description="Tat-type signal" evidence="1">
    <location>
        <begin position="1"/>
        <end position="29"/>
    </location>
</feature>
<feature type="chain" id="PRO_5000309931" description="Periplasmic nitrate reductase" evidence="1">
    <location>
        <begin position="30"/>
        <end position="838"/>
    </location>
</feature>
<feature type="domain" description="4Fe-4S Mo/W bis-MGD-type" evidence="1">
    <location>
        <begin position="40"/>
        <end position="96"/>
    </location>
</feature>
<feature type="binding site" evidence="1">
    <location>
        <position position="47"/>
    </location>
    <ligand>
        <name>[4Fe-4S] cluster</name>
        <dbReference type="ChEBI" id="CHEBI:49883"/>
    </ligand>
</feature>
<feature type="binding site" evidence="1">
    <location>
        <position position="50"/>
    </location>
    <ligand>
        <name>[4Fe-4S] cluster</name>
        <dbReference type="ChEBI" id="CHEBI:49883"/>
    </ligand>
</feature>
<feature type="binding site" evidence="1">
    <location>
        <position position="54"/>
    </location>
    <ligand>
        <name>[4Fe-4S] cluster</name>
        <dbReference type="ChEBI" id="CHEBI:49883"/>
    </ligand>
</feature>
<feature type="binding site" evidence="1">
    <location>
        <position position="82"/>
    </location>
    <ligand>
        <name>[4Fe-4S] cluster</name>
        <dbReference type="ChEBI" id="CHEBI:49883"/>
    </ligand>
</feature>
<feature type="binding site" evidence="1">
    <location>
        <position position="84"/>
    </location>
    <ligand>
        <name>Mo-bis(molybdopterin guanine dinucleotide)</name>
        <dbReference type="ChEBI" id="CHEBI:60539"/>
    </ligand>
</feature>
<feature type="binding site" evidence="1">
    <location>
        <position position="151"/>
    </location>
    <ligand>
        <name>Mo-bis(molybdopterin guanine dinucleotide)</name>
        <dbReference type="ChEBI" id="CHEBI:60539"/>
    </ligand>
</feature>
<feature type="binding site" evidence="1">
    <location>
        <position position="176"/>
    </location>
    <ligand>
        <name>Mo-bis(molybdopterin guanine dinucleotide)</name>
        <dbReference type="ChEBI" id="CHEBI:60539"/>
    </ligand>
</feature>
<feature type="binding site" evidence="1">
    <location>
        <position position="180"/>
    </location>
    <ligand>
        <name>Mo-bis(molybdopterin guanine dinucleotide)</name>
        <dbReference type="ChEBI" id="CHEBI:60539"/>
    </ligand>
</feature>
<feature type="binding site" evidence="1">
    <location>
        <begin position="213"/>
        <end position="220"/>
    </location>
    <ligand>
        <name>Mo-bis(molybdopterin guanine dinucleotide)</name>
        <dbReference type="ChEBI" id="CHEBI:60539"/>
    </ligand>
</feature>
<feature type="binding site" evidence="1">
    <location>
        <begin position="244"/>
        <end position="248"/>
    </location>
    <ligand>
        <name>Mo-bis(molybdopterin guanine dinucleotide)</name>
        <dbReference type="ChEBI" id="CHEBI:60539"/>
    </ligand>
</feature>
<feature type="binding site" evidence="1">
    <location>
        <begin position="263"/>
        <end position="265"/>
    </location>
    <ligand>
        <name>Mo-bis(molybdopterin guanine dinucleotide)</name>
        <dbReference type="ChEBI" id="CHEBI:60539"/>
    </ligand>
</feature>
<feature type="binding site" evidence="1">
    <location>
        <position position="374"/>
    </location>
    <ligand>
        <name>Mo-bis(molybdopterin guanine dinucleotide)</name>
        <dbReference type="ChEBI" id="CHEBI:60539"/>
    </ligand>
</feature>
<feature type="binding site" evidence="1">
    <location>
        <position position="378"/>
    </location>
    <ligand>
        <name>Mo-bis(molybdopterin guanine dinucleotide)</name>
        <dbReference type="ChEBI" id="CHEBI:60539"/>
    </ligand>
</feature>
<feature type="binding site" evidence="1">
    <location>
        <position position="484"/>
    </location>
    <ligand>
        <name>Mo-bis(molybdopterin guanine dinucleotide)</name>
        <dbReference type="ChEBI" id="CHEBI:60539"/>
    </ligand>
</feature>
<feature type="binding site" evidence="1">
    <location>
        <begin position="510"/>
        <end position="511"/>
    </location>
    <ligand>
        <name>Mo-bis(molybdopterin guanine dinucleotide)</name>
        <dbReference type="ChEBI" id="CHEBI:60539"/>
    </ligand>
</feature>
<feature type="binding site" evidence="1">
    <location>
        <position position="533"/>
    </location>
    <ligand>
        <name>Mo-bis(molybdopterin guanine dinucleotide)</name>
        <dbReference type="ChEBI" id="CHEBI:60539"/>
    </ligand>
</feature>
<feature type="binding site" evidence="1">
    <location>
        <position position="560"/>
    </location>
    <ligand>
        <name>Mo-bis(molybdopterin guanine dinucleotide)</name>
        <dbReference type="ChEBI" id="CHEBI:60539"/>
    </ligand>
</feature>
<feature type="binding site" evidence="1">
    <location>
        <begin position="720"/>
        <end position="729"/>
    </location>
    <ligand>
        <name>Mo-bis(molybdopterin guanine dinucleotide)</name>
        <dbReference type="ChEBI" id="CHEBI:60539"/>
    </ligand>
</feature>
<feature type="binding site" evidence="1">
    <location>
        <position position="796"/>
    </location>
    <ligand>
        <name>substrate</name>
    </ligand>
</feature>
<feature type="binding site" evidence="1">
    <location>
        <position position="804"/>
    </location>
    <ligand>
        <name>Mo-bis(molybdopterin guanine dinucleotide)</name>
        <dbReference type="ChEBI" id="CHEBI:60539"/>
    </ligand>
</feature>
<feature type="binding site" evidence="1">
    <location>
        <position position="821"/>
    </location>
    <ligand>
        <name>Mo-bis(molybdopterin guanine dinucleotide)</name>
        <dbReference type="ChEBI" id="CHEBI:60539"/>
    </ligand>
</feature>